<proteinExistence type="evidence at protein level"/>
<reference key="1">
    <citation type="journal article" date="2000" name="J. Mol. Evol.">
        <title>The structure and gene repertoire of an ancient red algal plastid genome.</title>
        <authorList>
            <person name="Gloeckner G."/>
            <person name="Rosenthal A."/>
            <person name="Valentin K.-U."/>
        </authorList>
    </citation>
    <scope>NUCLEOTIDE SEQUENCE [LARGE SCALE GENOMIC DNA]</scope>
    <source>
        <strain>RK-1</strain>
    </source>
</reference>
<evidence type="ECO:0000255" key="1">
    <source>
        <dbReference type="HAMAP-Rule" id="MF_00752"/>
    </source>
</evidence>
<evidence type="ECO:0000305" key="2"/>
<dbReference type="EMBL" id="AF022186">
    <property type="protein sequence ID" value="AAB82664.1"/>
    <property type="molecule type" value="Genomic_DNA"/>
</dbReference>
<dbReference type="PIR" id="T11993">
    <property type="entry name" value="T11993"/>
</dbReference>
<dbReference type="RefSeq" id="NP_045097.1">
    <property type="nucleotide sequence ID" value="NC_001840.1"/>
</dbReference>
<dbReference type="PDB" id="4YUU">
    <property type="method" value="X-ray"/>
    <property type="resolution" value="2.77 A"/>
    <property type="chains" value="H1/H2/h1/h2=1-67"/>
</dbReference>
<dbReference type="PDBsum" id="4YUU"/>
<dbReference type="SMR" id="O19925"/>
<dbReference type="GeneID" id="800137"/>
<dbReference type="GO" id="GO:0009535">
    <property type="term" value="C:chloroplast thylakoid membrane"/>
    <property type="evidence" value="ECO:0007669"/>
    <property type="project" value="UniProtKB-SubCell"/>
</dbReference>
<dbReference type="GO" id="GO:0009523">
    <property type="term" value="C:photosystem II"/>
    <property type="evidence" value="ECO:0007669"/>
    <property type="project" value="UniProtKB-KW"/>
</dbReference>
<dbReference type="GO" id="GO:0042301">
    <property type="term" value="F:phosphate ion binding"/>
    <property type="evidence" value="ECO:0007669"/>
    <property type="project" value="InterPro"/>
</dbReference>
<dbReference type="GO" id="GO:0015979">
    <property type="term" value="P:photosynthesis"/>
    <property type="evidence" value="ECO:0007669"/>
    <property type="project" value="UniProtKB-UniRule"/>
</dbReference>
<dbReference type="GO" id="GO:0050821">
    <property type="term" value="P:protein stabilization"/>
    <property type="evidence" value="ECO:0007669"/>
    <property type="project" value="InterPro"/>
</dbReference>
<dbReference type="Gene3D" id="1.20.5.880">
    <property type="entry name" value="Photosystem II reaction center protein H"/>
    <property type="match status" value="1"/>
</dbReference>
<dbReference type="HAMAP" id="MF_00752">
    <property type="entry name" value="PSII_PsbH"/>
    <property type="match status" value="1"/>
</dbReference>
<dbReference type="InterPro" id="IPR001056">
    <property type="entry name" value="PSII_PsbH"/>
</dbReference>
<dbReference type="InterPro" id="IPR036863">
    <property type="entry name" value="PSII_PsbH_sf"/>
</dbReference>
<dbReference type="NCBIfam" id="NF002728">
    <property type="entry name" value="PRK02624.1"/>
    <property type="match status" value="1"/>
</dbReference>
<dbReference type="PANTHER" id="PTHR34469">
    <property type="entry name" value="PHOTOSYSTEM II REACTION CENTER PROTEIN H"/>
    <property type="match status" value="1"/>
</dbReference>
<dbReference type="PANTHER" id="PTHR34469:SF4">
    <property type="entry name" value="PHOTOSYSTEM II REACTION CENTER PROTEIN H"/>
    <property type="match status" value="1"/>
</dbReference>
<dbReference type="Pfam" id="PF00737">
    <property type="entry name" value="PsbH"/>
    <property type="match status" value="1"/>
</dbReference>
<dbReference type="SUPFAM" id="SSF161025">
    <property type="entry name" value="Photosystem II 10 kDa phosphoprotein PsbH"/>
    <property type="match status" value="1"/>
</dbReference>
<feature type="chain" id="PRO_0000070505" description="Photosystem II reaction center protein H">
    <location>
        <begin position="1"/>
        <end position="67"/>
    </location>
</feature>
<feature type="transmembrane region" description="Helical" evidence="1">
    <location>
        <begin position="29"/>
        <end position="49"/>
    </location>
</feature>
<geneLocation type="chloroplast"/>
<name>PSBH_CYACA</name>
<comment type="function">
    <text evidence="1">One of the components of the core complex of photosystem II (PSII), required for its stability and/or assembly. PSII is a light-driven water:plastoquinone oxidoreductase that uses light energy to abstract electrons from H(2)O, generating O(2) and a proton gradient subsequently used for ATP formation. It consists of a core antenna complex that captures photons, and an electron transfer chain that converts photonic excitation into a charge separation.</text>
</comment>
<comment type="subunit">
    <text evidence="2">PSII is composed of 1 copy each of membrane proteins PsbA, PsbB, PsbC, PsbD, PsbE, PsbF, PsbH, PsbI, PsbJ, PsbK, PsbL, PsbM, PsbT, PsbY, PsbZ, Psb30/Ycf12, at least 3 peripheral proteins of the oxygen-evolving complex and a large number of cofactors. It forms dimeric complexes.</text>
</comment>
<comment type="subcellular location">
    <subcellularLocation>
        <location evidence="1">Plastid</location>
        <location evidence="1">Chloroplast thylakoid membrane</location>
        <topology evidence="1">Single-pass membrane protein</topology>
    </subcellularLocation>
</comment>
<comment type="similarity">
    <text evidence="1">Belongs to the PsbH family.</text>
</comment>
<keyword id="KW-0002">3D-structure</keyword>
<keyword id="KW-0150">Chloroplast</keyword>
<keyword id="KW-0472">Membrane</keyword>
<keyword id="KW-0602">Photosynthesis</keyword>
<keyword id="KW-0604">Photosystem II</keyword>
<keyword id="KW-0934">Plastid</keyword>
<keyword id="KW-0793">Thylakoid</keyword>
<keyword id="KW-0812">Transmembrane</keyword>
<keyword id="KW-1133">Transmembrane helix</keyword>
<protein>
    <recommendedName>
        <fullName evidence="1">Photosystem II reaction center protein H</fullName>
        <shortName evidence="1">PSII-H</shortName>
    </recommendedName>
</protein>
<accession>O19925</accession>
<gene>
    <name evidence="1" type="primary">psbH</name>
</gene>
<organism>
    <name type="scientific">Cyanidium caldarium</name>
    <name type="common">Red alga</name>
    <dbReference type="NCBI Taxonomy" id="2771"/>
    <lineage>
        <taxon>Eukaryota</taxon>
        <taxon>Rhodophyta</taxon>
        <taxon>Bangiophyceae</taxon>
        <taxon>Cyanidiales</taxon>
        <taxon>Cyanidiaceae</taxon>
        <taxon>Cyanidium</taxon>
    </lineage>
</organism>
<sequence length="67" mass="7495">MALKTRLGELLRPLNSQYGKVAPGWGTTPIMGIFMALFLLFLIIILQIYNSSLILENLDISWTTLGI</sequence>